<proteinExistence type="evidence at protein level"/>
<reference evidence="8" key="1">
    <citation type="journal article" date="2011" name="Cell">
        <title>Insight into structure and assembly of the nuclear pore complex by utilizing the genome of a eukaryotic thermophile.</title>
        <authorList>
            <person name="Amlacher S."/>
            <person name="Sarges P."/>
            <person name="Flemming D."/>
            <person name="van Noort V."/>
            <person name="Kunze R."/>
            <person name="Devos D.P."/>
            <person name="Arumugam M."/>
            <person name="Bork P."/>
            <person name="Hurt E."/>
        </authorList>
    </citation>
    <scope>NUCLEOTIDE SEQUENCE [LARGE SCALE GENOMIC DNA]</scope>
    <source>
        <strain evidence="8">DSM 1495 / CBS 144.50 / IMI 039719</strain>
    </source>
</reference>
<reference evidence="9" key="2">
    <citation type="journal article" date="2018" name="Science">
        <title>Structure of the DASH/Dam1 complex shows its role at the yeast kinetochore-microtubule interface.</title>
        <authorList>
            <person name="Jenni S."/>
            <person name="Harrison S.C."/>
        </authorList>
    </citation>
    <scope>STRUCTURE BY ELECTRON MICROSCOPY (4.50 ANGSTROMS) OF 24-117</scope>
    <scope>IDENTIFICATION IN THE DASH COMPLEX</scope>
</reference>
<gene>
    <name evidence="5" type="primary">DAD2</name>
    <name evidence="7" type="ORF">CTHT_0002350</name>
</gene>
<name>DAD2_CHATD</name>
<comment type="function">
    <text evidence="1">Component of the DASH complex that connects microtubules with kinetochores and couples microtubule depolymerisation to chromosome movement; it is involved in retrieving kinetochores to the spindle poles before their re-orientation on the spindle in early mitosis and allows microtubule depolymerization to pull chromosomes apart and resist detachment during anaphase. Kinetochores, consisting of a centromere-associated inner segment and a microtubule-contacting outer segment, play a crucial role in chromosome segregation by mediating the physical connection between centromeric DNA and microtubules. Kinetochores also serve as an input point for the spindle assembly checkpoint, which delays anaphase until all chromosomes have bioriented on the mitotic spindle.</text>
</comment>
<comment type="subunit">
    <text evidence="1 2 4">Component of the DASH complex consisting of ASK1, DAD1, DAD2, DAD3, DAD4, DAM1, DUO1, HSK3, SPC19 and SPC34, with a stoichiometry of one copy of each subunit per complex (PubMed:29724956). Multiple DASH complexes oligomerize to form a ring that encircles spindle microtubules and organizes the rod-like NDC80 complexes of the outer kinetochore (PubMed:29724956). DASH complex oligomerization strengthens microtubule attachments (By similarity). On cytoplasmic microtubules, DASH complexes appear to form patches instead of rings (By similarity).</text>
</comment>
<comment type="subcellular location">
    <subcellularLocation>
        <location evidence="1">Chromosome</location>
        <location evidence="1">Centromere</location>
        <location evidence="1">Kinetochore</location>
    </subcellularLocation>
    <subcellularLocation>
        <location evidence="1">Cytoplasm</location>
        <location evidence="1">Cytoskeleton</location>
        <location evidence="1">Spindle</location>
    </subcellularLocation>
    <subcellularLocation>
        <location evidence="1">Nucleus</location>
    </subcellularLocation>
</comment>
<comment type="similarity">
    <text evidence="6">Belongs to the DASH complex DAD2 family.</text>
</comment>
<sequence>MSGFSSRPLSTHLRQPSLAPPQGQSPALLARVNEKKAELENLKELRDLSAAVAAQMEALEQKLSTLSSGTEAIATVLANWHNVLRAISMASAKIPEPKEETEENTVPLPQTLVRIPTEHAPALQAHAEGATEEESGRG</sequence>
<accession>G0RZB3</accession>
<protein>
    <recommendedName>
        <fullName evidence="5">DASH complex subunit DAD2</fullName>
    </recommendedName>
    <alternativeName>
        <fullName evidence="1">Outer kinetochore protein DAD2</fullName>
    </alternativeName>
</protein>
<organism evidence="8">
    <name type="scientific">Chaetomium thermophilum (strain DSM 1495 / CBS 144.50 / IMI 039719)</name>
    <name type="common">Thermochaetoides thermophila</name>
    <dbReference type="NCBI Taxonomy" id="759272"/>
    <lineage>
        <taxon>Eukaryota</taxon>
        <taxon>Fungi</taxon>
        <taxon>Dikarya</taxon>
        <taxon>Ascomycota</taxon>
        <taxon>Pezizomycotina</taxon>
        <taxon>Sordariomycetes</taxon>
        <taxon>Sordariomycetidae</taxon>
        <taxon>Sordariales</taxon>
        <taxon>Chaetomiaceae</taxon>
        <taxon>Thermochaetoides</taxon>
    </lineage>
</organism>
<dbReference type="EMBL" id="GL988032">
    <property type="protein sequence ID" value="EGS23541.1"/>
    <property type="molecule type" value="Genomic_DNA"/>
</dbReference>
<dbReference type="RefSeq" id="XP_006690783.1">
    <property type="nucleotide sequence ID" value="XM_006690720.1"/>
</dbReference>
<dbReference type="PDB" id="6CFZ">
    <property type="method" value="EM"/>
    <property type="resolution" value="4.50 A"/>
    <property type="chains" value="C=24-117"/>
</dbReference>
<dbReference type="PDBsum" id="6CFZ"/>
<dbReference type="EMDB" id="EMD-7469"/>
<dbReference type="SMR" id="G0RZB3"/>
<dbReference type="IntAct" id="G0RZB3">
    <property type="interactions" value="1"/>
</dbReference>
<dbReference type="STRING" id="759272.G0RZB3"/>
<dbReference type="GeneID" id="18254273"/>
<dbReference type="KEGG" id="cthr:CTHT_0002350"/>
<dbReference type="eggNOG" id="ENOG502SG7I">
    <property type="taxonomic scope" value="Eukaryota"/>
</dbReference>
<dbReference type="HOGENOM" id="CLU_138063_0_0_1"/>
<dbReference type="OMA" id="QAINMAS"/>
<dbReference type="OrthoDB" id="3230169at2759"/>
<dbReference type="Proteomes" id="UP000008066">
    <property type="component" value="Unassembled WGS sequence"/>
</dbReference>
<dbReference type="GO" id="GO:0005737">
    <property type="term" value="C:cytoplasm"/>
    <property type="evidence" value="ECO:0007669"/>
    <property type="project" value="UniProtKB-KW"/>
</dbReference>
<dbReference type="GO" id="GO:0042729">
    <property type="term" value="C:DASH complex"/>
    <property type="evidence" value="ECO:0000314"/>
    <property type="project" value="UniProtKB"/>
</dbReference>
<dbReference type="GO" id="GO:0000776">
    <property type="term" value="C:kinetochore"/>
    <property type="evidence" value="ECO:0000305"/>
    <property type="project" value="UniProtKB"/>
</dbReference>
<dbReference type="GO" id="GO:0005874">
    <property type="term" value="C:microtubule"/>
    <property type="evidence" value="ECO:0007669"/>
    <property type="project" value="UniProtKB-KW"/>
</dbReference>
<dbReference type="GO" id="GO:0072686">
    <property type="term" value="C:mitotic spindle"/>
    <property type="evidence" value="ECO:0000305"/>
    <property type="project" value="UniProtKB"/>
</dbReference>
<dbReference type="GO" id="GO:1990023">
    <property type="term" value="C:mitotic spindle midzone"/>
    <property type="evidence" value="ECO:0007669"/>
    <property type="project" value="TreeGrafter"/>
</dbReference>
<dbReference type="GO" id="GO:0044732">
    <property type="term" value="C:mitotic spindle pole body"/>
    <property type="evidence" value="ECO:0007669"/>
    <property type="project" value="TreeGrafter"/>
</dbReference>
<dbReference type="GO" id="GO:0051315">
    <property type="term" value="P:attachment of mitotic spindle microtubules to kinetochore"/>
    <property type="evidence" value="ECO:0000305"/>
    <property type="project" value="UniProtKB"/>
</dbReference>
<dbReference type="GO" id="GO:0008608">
    <property type="term" value="P:attachment of spindle microtubules to kinetochore"/>
    <property type="evidence" value="ECO:0000250"/>
    <property type="project" value="UniProtKB"/>
</dbReference>
<dbReference type="GO" id="GO:0051301">
    <property type="term" value="P:cell division"/>
    <property type="evidence" value="ECO:0007669"/>
    <property type="project" value="UniProtKB-KW"/>
</dbReference>
<dbReference type="GO" id="GO:1990758">
    <property type="term" value="P:mitotic sister chromatid biorientation"/>
    <property type="evidence" value="ECO:0000250"/>
    <property type="project" value="UniProtKB"/>
</dbReference>
<dbReference type="GO" id="GO:1990976">
    <property type="term" value="P:protein transport along microtubule to mitotic spindle pole body"/>
    <property type="evidence" value="ECO:0000250"/>
    <property type="project" value="UniProtKB"/>
</dbReference>
<dbReference type="InterPro" id="IPR013963">
    <property type="entry name" value="DASH_Dad2"/>
</dbReference>
<dbReference type="PANTHER" id="PTHR28036">
    <property type="entry name" value="DASH COMPLEX SUBUNIT DAD2"/>
    <property type="match status" value="1"/>
</dbReference>
<dbReference type="PANTHER" id="PTHR28036:SF1">
    <property type="entry name" value="DASH COMPLEX SUBUNIT DAD2"/>
    <property type="match status" value="1"/>
</dbReference>
<dbReference type="Pfam" id="PF08654">
    <property type="entry name" value="DASH_Dad2"/>
    <property type="match status" value="1"/>
</dbReference>
<keyword id="KW-0002">3D-structure</keyword>
<keyword id="KW-0131">Cell cycle</keyword>
<keyword id="KW-0132">Cell division</keyword>
<keyword id="KW-0137">Centromere</keyword>
<keyword id="KW-0158">Chromosome</keyword>
<keyword id="KW-0159">Chromosome partition</keyword>
<keyword id="KW-0963">Cytoplasm</keyword>
<keyword id="KW-0206">Cytoskeleton</keyword>
<keyword id="KW-0995">Kinetochore</keyword>
<keyword id="KW-0493">Microtubule</keyword>
<keyword id="KW-0498">Mitosis</keyword>
<keyword id="KW-0539">Nucleus</keyword>
<keyword id="KW-1185">Reference proteome</keyword>
<evidence type="ECO:0000250" key="1">
    <source>
        <dbReference type="UniProtKB" id="P36162"/>
    </source>
</evidence>
<evidence type="ECO:0000250" key="2">
    <source>
        <dbReference type="UniProtKB" id="Q9UTG8"/>
    </source>
</evidence>
<evidence type="ECO:0000256" key="3">
    <source>
        <dbReference type="SAM" id="MobiDB-lite"/>
    </source>
</evidence>
<evidence type="ECO:0000269" key="4">
    <source>
    </source>
</evidence>
<evidence type="ECO:0000303" key="5">
    <source>
    </source>
</evidence>
<evidence type="ECO:0000305" key="6"/>
<evidence type="ECO:0000312" key="7">
    <source>
        <dbReference type="EMBL" id="EGS23541.1"/>
    </source>
</evidence>
<evidence type="ECO:0000312" key="8">
    <source>
        <dbReference type="Proteomes" id="UP000008066"/>
    </source>
</evidence>
<evidence type="ECO:0007744" key="9">
    <source>
        <dbReference type="PDB" id="6CFZ"/>
    </source>
</evidence>
<feature type="chain" id="PRO_0000459460" description="DASH complex subunit DAD2">
    <location>
        <begin position="1"/>
        <end position="138"/>
    </location>
</feature>
<feature type="region of interest" description="Disordered" evidence="3">
    <location>
        <begin position="1"/>
        <end position="25"/>
    </location>
</feature>
<feature type="region of interest" description="Disordered" evidence="3">
    <location>
        <begin position="116"/>
        <end position="138"/>
    </location>
</feature>
<feature type="compositionally biased region" description="Polar residues" evidence="3">
    <location>
        <begin position="1"/>
        <end position="14"/>
    </location>
</feature>